<dbReference type="EC" id="5.4.2.11" evidence="2"/>
<dbReference type="EMBL" id="AE006468">
    <property type="protein sequence ID" value="AAL19710.1"/>
    <property type="molecule type" value="Genomic_DNA"/>
</dbReference>
<dbReference type="RefSeq" id="NP_459751.1">
    <property type="nucleotide sequence ID" value="NC_003197.2"/>
</dbReference>
<dbReference type="RefSeq" id="WP_000301556.1">
    <property type="nucleotide sequence ID" value="NC_003197.2"/>
</dbReference>
<dbReference type="SMR" id="Q8ZQS2"/>
<dbReference type="STRING" id="99287.STM0772"/>
<dbReference type="PaxDb" id="99287-STM0772"/>
<dbReference type="GeneID" id="1252292"/>
<dbReference type="KEGG" id="stm:STM0772"/>
<dbReference type="PATRIC" id="fig|99287.12.peg.805"/>
<dbReference type="HOGENOM" id="CLU_033323_1_1_6"/>
<dbReference type="OMA" id="MLPYWYD"/>
<dbReference type="PhylomeDB" id="Q8ZQS2"/>
<dbReference type="BioCyc" id="SENT99287:STM0772-MONOMER"/>
<dbReference type="UniPathway" id="UPA00109">
    <property type="reaction ID" value="UER00186"/>
</dbReference>
<dbReference type="Proteomes" id="UP000001014">
    <property type="component" value="Chromosome"/>
</dbReference>
<dbReference type="GO" id="GO:0004619">
    <property type="term" value="F:phosphoglycerate mutase activity"/>
    <property type="evidence" value="ECO:0007669"/>
    <property type="project" value="UniProtKB-EC"/>
</dbReference>
<dbReference type="GO" id="GO:0006094">
    <property type="term" value="P:gluconeogenesis"/>
    <property type="evidence" value="ECO:0007669"/>
    <property type="project" value="UniProtKB-UniRule"/>
</dbReference>
<dbReference type="GO" id="GO:0006096">
    <property type="term" value="P:glycolytic process"/>
    <property type="evidence" value="ECO:0007669"/>
    <property type="project" value="UniProtKB-UniRule"/>
</dbReference>
<dbReference type="CDD" id="cd07067">
    <property type="entry name" value="HP_PGM_like"/>
    <property type="match status" value="1"/>
</dbReference>
<dbReference type="FunFam" id="3.40.50.1240:FF:000003">
    <property type="entry name" value="2,3-bisphosphoglycerate-dependent phosphoglycerate mutase"/>
    <property type="match status" value="1"/>
</dbReference>
<dbReference type="Gene3D" id="3.40.50.1240">
    <property type="entry name" value="Phosphoglycerate mutase-like"/>
    <property type="match status" value="1"/>
</dbReference>
<dbReference type="HAMAP" id="MF_01039">
    <property type="entry name" value="PGAM_GpmA"/>
    <property type="match status" value="1"/>
</dbReference>
<dbReference type="InterPro" id="IPR013078">
    <property type="entry name" value="His_Pase_superF_clade-1"/>
</dbReference>
<dbReference type="InterPro" id="IPR029033">
    <property type="entry name" value="His_PPase_superfam"/>
</dbReference>
<dbReference type="InterPro" id="IPR001345">
    <property type="entry name" value="PG/BPGM_mutase_AS"/>
</dbReference>
<dbReference type="InterPro" id="IPR005952">
    <property type="entry name" value="Phosphogly_mut1"/>
</dbReference>
<dbReference type="NCBIfam" id="TIGR01258">
    <property type="entry name" value="pgm_1"/>
    <property type="match status" value="1"/>
</dbReference>
<dbReference type="NCBIfam" id="NF010713">
    <property type="entry name" value="PRK14115.1"/>
    <property type="match status" value="1"/>
</dbReference>
<dbReference type="PANTHER" id="PTHR11931">
    <property type="entry name" value="PHOSPHOGLYCERATE MUTASE"/>
    <property type="match status" value="1"/>
</dbReference>
<dbReference type="Pfam" id="PF00300">
    <property type="entry name" value="His_Phos_1"/>
    <property type="match status" value="1"/>
</dbReference>
<dbReference type="PIRSF" id="PIRSF000709">
    <property type="entry name" value="6PFK_2-Ptase"/>
    <property type="match status" value="1"/>
</dbReference>
<dbReference type="SMART" id="SM00855">
    <property type="entry name" value="PGAM"/>
    <property type="match status" value="1"/>
</dbReference>
<dbReference type="SUPFAM" id="SSF53254">
    <property type="entry name" value="Phosphoglycerate mutase-like"/>
    <property type="match status" value="1"/>
</dbReference>
<dbReference type="PROSITE" id="PS00175">
    <property type="entry name" value="PG_MUTASE"/>
    <property type="match status" value="1"/>
</dbReference>
<organism>
    <name type="scientific">Salmonella typhimurium (strain LT2 / SGSC1412 / ATCC 700720)</name>
    <dbReference type="NCBI Taxonomy" id="99287"/>
    <lineage>
        <taxon>Bacteria</taxon>
        <taxon>Pseudomonadati</taxon>
        <taxon>Pseudomonadota</taxon>
        <taxon>Gammaproteobacteria</taxon>
        <taxon>Enterobacterales</taxon>
        <taxon>Enterobacteriaceae</taxon>
        <taxon>Salmonella</taxon>
    </lineage>
</organism>
<comment type="function">
    <text evidence="2">Catalyzes the interconversion of 2-phosphoglycerate and 3-phosphoglycerate.</text>
</comment>
<comment type="catalytic activity">
    <reaction evidence="2">
        <text>(2R)-2-phosphoglycerate = (2R)-3-phosphoglycerate</text>
        <dbReference type="Rhea" id="RHEA:15901"/>
        <dbReference type="ChEBI" id="CHEBI:58272"/>
        <dbReference type="ChEBI" id="CHEBI:58289"/>
        <dbReference type="EC" id="5.4.2.11"/>
    </reaction>
</comment>
<comment type="pathway">
    <text evidence="2">Carbohydrate degradation; glycolysis; pyruvate from D-glyceraldehyde 3-phosphate: step 3/5.</text>
</comment>
<comment type="subunit">
    <text evidence="2">Homodimer.</text>
</comment>
<comment type="similarity">
    <text evidence="2">Belongs to the phosphoglycerate mutase family. BPG-dependent PGAM subfamily.</text>
</comment>
<sequence>MAVTKLVLVRHGESQWNKENRFTGWYDVDLSEKGVSEAKAAGKLLKEEGFSFDFAYTSVLKRAIHTLWNVLDELDQAWLPVEKSWKLNERHYGALQGLNKAETAEKYGDEQVKQWRRGFAVTPPELTKDDERYPGHDPRYAKLSEKELPLTESLALTIDRVIPYWNDTILPRMKSGERVIIAAHGNSLRALVKYLDNMSEDEILELNIPTGVPLVYEFDENFKPLKHYYLGNADEIAAKAAAVANQGKAK</sequence>
<feature type="initiator methionine" description="Removed" evidence="1">
    <location>
        <position position="1"/>
    </location>
</feature>
<feature type="chain" id="PRO_0000179908" description="2,3-bisphosphoglycerate-dependent phosphoglycerate mutase">
    <location>
        <begin position="2"/>
        <end position="250"/>
    </location>
</feature>
<feature type="active site" description="Tele-phosphohistidine intermediate" evidence="2">
    <location>
        <position position="11"/>
    </location>
</feature>
<feature type="active site" description="Proton donor/acceptor" evidence="2">
    <location>
        <position position="89"/>
    </location>
</feature>
<feature type="binding site" evidence="2">
    <location>
        <begin position="10"/>
        <end position="17"/>
    </location>
    <ligand>
        <name>substrate</name>
    </ligand>
</feature>
<feature type="binding site" evidence="2">
    <location>
        <begin position="23"/>
        <end position="24"/>
    </location>
    <ligand>
        <name>substrate</name>
    </ligand>
</feature>
<feature type="binding site" evidence="2">
    <location>
        <position position="62"/>
    </location>
    <ligand>
        <name>substrate</name>
    </ligand>
</feature>
<feature type="binding site" evidence="2">
    <location>
        <begin position="89"/>
        <end position="92"/>
    </location>
    <ligand>
        <name>substrate</name>
    </ligand>
</feature>
<feature type="binding site" evidence="2">
    <location>
        <position position="100"/>
    </location>
    <ligand>
        <name>substrate</name>
    </ligand>
</feature>
<feature type="binding site" evidence="2">
    <location>
        <begin position="116"/>
        <end position="117"/>
    </location>
    <ligand>
        <name>substrate</name>
    </ligand>
</feature>
<feature type="binding site" evidence="2">
    <location>
        <begin position="185"/>
        <end position="186"/>
    </location>
    <ligand>
        <name>substrate</name>
    </ligand>
</feature>
<feature type="site" description="Transition state stabilizer" evidence="2">
    <location>
        <position position="184"/>
    </location>
</feature>
<name>GPMA_SALTY</name>
<gene>
    <name evidence="2" type="primary">gpmA</name>
    <name type="ordered locus">STM0772</name>
</gene>
<protein>
    <recommendedName>
        <fullName evidence="2">2,3-bisphosphoglycerate-dependent phosphoglycerate mutase</fullName>
        <shortName evidence="2">BPG-dependent PGAM</shortName>
        <shortName evidence="2">PGAM</shortName>
        <shortName evidence="2">Phosphoglyceromutase</shortName>
        <shortName evidence="2">dPGM</shortName>
        <ecNumber evidence="2">5.4.2.11</ecNumber>
    </recommendedName>
</protein>
<proteinExistence type="inferred from homology"/>
<accession>Q8ZQS2</accession>
<keyword id="KW-0312">Gluconeogenesis</keyword>
<keyword id="KW-0324">Glycolysis</keyword>
<keyword id="KW-0413">Isomerase</keyword>
<keyword id="KW-1185">Reference proteome</keyword>
<reference key="1">
    <citation type="journal article" date="2001" name="Nature">
        <title>Complete genome sequence of Salmonella enterica serovar Typhimurium LT2.</title>
        <authorList>
            <person name="McClelland M."/>
            <person name="Sanderson K.E."/>
            <person name="Spieth J."/>
            <person name="Clifton S.W."/>
            <person name="Latreille P."/>
            <person name="Courtney L."/>
            <person name="Porwollik S."/>
            <person name="Ali J."/>
            <person name="Dante M."/>
            <person name="Du F."/>
            <person name="Hou S."/>
            <person name="Layman D."/>
            <person name="Leonard S."/>
            <person name="Nguyen C."/>
            <person name="Scott K."/>
            <person name="Holmes A."/>
            <person name="Grewal N."/>
            <person name="Mulvaney E."/>
            <person name="Ryan E."/>
            <person name="Sun H."/>
            <person name="Florea L."/>
            <person name="Miller W."/>
            <person name="Stoneking T."/>
            <person name="Nhan M."/>
            <person name="Waterston R."/>
            <person name="Wilson R.K."/>
        </authorList>
    </citation>
    <scope>NUCLEOTIDE SEQUENCE [LARGE SCALE GENOMIC DNA]</scope>
    <source>
        <strain>LT2 / SGSC1412 / ATCC 700720</strain>
    </source>
</reference>
<evidence type="ECO:0000250" key="1"/>
<evidence type="ECO:0000255" key="2">
    <source>
        <dbReference type="HAMAP-Rule" id="MF_01039"/>
    </source>
</evidence>